<protein>
    <recommendedName>
        <fullName evidence="1">4-diphosphocytidyl-2-C-methyl-D-erythritol kinase</fullName>
        <shortName evidence="1">CMK</shortName>
        <ecNumber evidence="1">2.7.1.148</ecNumber>
    </recommendedName>
    <alternativeName>
        <fullName evidence="1">4-(cytidine-5'-diphospho)-2-C-methyl-D-erythritol kinase</fullName>
    </alternativeName>
</protein>
<accession>B7UQ96</accession>
<proteinExistence type="inferred from homology"/>
<dbReference type="EC" id="2.7.1.148" evidence="1"/>
<dbReference type="EMBL" id="FM180568">
    <property type="protein sequence ID" value="CAS08879.1"/>
    <property type="molecule type" value="Genomic_DNA"/>
</dbReference>
<dbReference type="RefSeq" id="WP_001260344.1">
    <property type="nucleotide sequence ID" value="NC_011601.1"/>
</dbReference>
<dbReference type="SMR" id="B7UQ96"/>
<dbReference type="KEGG" id="ecg:E2348C_1331"/>
<dbReference type="HOGENOM" id="CLU_053057_3_0_6"/>
<dbReference type="UniPathway" id="UPA00056">
    <property type="reaction ID" value="UER00094"/>
</dbReference>
<dbReference type="Proteomes" id="UP000008205">
    <property type="component" value="Chromosome"/>
</dbReference>
<dbReference type="GO" id="GO:0050515">
    <property type="term" value="F:4-(cytidine 5'-diphospho)-2-C-methyl-D-erythritol kinase activity"/>
    <property type="evidence" value="ECO:0007669"/>
    <property type="project" value="UniProtKB-UniRule"/>
</dbReference>
<dbReference type="GO" id="GO:0005524">
    <property type="term" value="F:ATP binding"/>
    <property type="evidence" value="ECO:0007669"/>
    <property type="project" value="UniProtKB-UniRule"/>
</dbReference>
<dbReference type="GO" id="GO:0019288">
    <property type="term" value="P:isopentenyl diphosphate biosynthetic process, methylerythritol 4-phosphate pathway"/>
    <property type="evidence" value="ECO:0007669"/>
    <property type="project" value="UniProtKB-UniRule"/>
</dbReference>
<dbReference type="GO" id="GO:0016114">
    <property type="term" value="P:terpenoid biosynthetic process"/>
    <property type="evidence" value="ECO:0007669"/>
    <property type="project" value="InterPro"/>
</dbReference>
<dbReference type="FunFam" id="3.30.230.10:FF:000022">
    <property type="entry name" value="4-diphosphocytidyl-2-C-methyl-D-erythritol kinase"/>
    <property type="match status" value="1"/>
</dbReference>
<dbReference type="FunFam" id="3.30.70.890:FF:000004">
    <property type="entry name" value="4-diphosphocytidyl-2-C-methyl-D-erythritol kinase"/>
    <property type="match status" value="1"/>
</dbReference>
<dbReference type="Gene3D" id="3.30.230.10">
    <property type="match status" value="1"/>
</dbReference>
<dbReference type="Gene3D" id="3.30.70.890">
    <property type="entry name" value="GHMP kinase, C-terminal domain"/>
    <property type="match status" value="1"/>
</dbReference>
<dbReference type="HAMAP" id="MF_00061">
    <property type="entry name" value="IspE"/>
    <property type="match status" value="1"/>
</dbReference>
<dbReference type="InterPro" id="IPR013750">
    <property type="entry name" value="GHMP_kinase_C_dom"/>
</dbReference>
<dbReference type="InterPro" id="IPR036554">
    <property type="entry name" value="GHMP_kinase_C_sf"/>
</dbReference>
<dbReference type="InterPro" id="IPR006204">
    <property type="entry name" value="GHMP_kinase_N_dom"/>
</dbReference>
<dbReference type="InterPro" id="IPR004424">
    <property type="entry name" value="IspE"/>
</dbReference>
<dbReference type="InterPro" id="IPR020568">
    <property type="entry name" value="Ribosomal_Su5_D2-typ_SF"/>
</dbReference>
<dbReference type="InterPro" id="IPR014721">
    <property type="entry name" value="Ribsml_uS5_D2-typ_fold_subgr"/>
</dbReference>
<dbReference type="NCBIfam" id="TIGR00154">
    <property type="entry name" value="ispE"/>
    <property type="match status" value="1"/>
</dbReference>
<dbReference type="PANTHER" id="PTHR43527">
    <property type="entry name" value="4-DIPHOSPHOCYTIDYL-2-C-METHYL-D-ERYTHRITOL KINASE, CHLOROPLASTIC"/>
    <property type="match status" value="1"/>
</dbReference>
<dbReference type="PANTHER" id="PTHR43527:SF2">
    <property type="entry name" value="4-DIPHOSPHOCYTIDYL-2-C-METHYL-D-ERYTHRITOL KINASE, CHLOROPLASTIC"/>
    <property type="match status" value="1"/>
</dbReference>
<dbReference type="Pfam" id="PF08544">
    <property type="entry name" value="GHMP_kinases_C"/>
    <property type="match status" value="1"/>
</dbReference>
<dbReference type="Pfam" id="PF00288">
    <property type="entry name" value="GHMP_kinases_N"/>
    <property type="match status" value="1"/>
</dbReference>
<dbReference type="PIRSF" id="PIRSF010376">
    <property type="entry name" value="IspE"/>
    <property type="match status" value="1"/>
</dbReference>
<dbReference type="SUPFAM" id="SSF55060">
    <property type="entry name" value="GHMP Kinase, C-terminal domain"/>
    <property type="match status" value="1"/>
</dbReference>
<dbReference type="SUPFAM" id="SSF54211">
    <property type="entry name" value="Ribosomal protein S5 domain 2-like"/>
    <property type="match status" value="1"/>
</dbReference>
<evidence type="ECO:0000255" key="1">
    <source>
        <dbReference type="HAMAP-Rule" id="MF_00061"/>
    </source>
</evidence>
<feature type="chain" id="PRO_1000190687" description="4-diphosphocytidyl-2-C-methyl-D-erythritol kinase">
    <location>
        <begin position="1"/>
        <end position="283"/>
    </location>
</feature>
<feature type="active site" evidence="1">
    <location>
        <position position="10"/>
    </location>
</feature>
<feature type="active site" evidence="1">
    <location>
        <position position="141"/>
    </location>
</feature>
<feature type="binding site" evidence="1">
    <location>
        <begin position="99"/>
        <end position="109"/>
    </location>
    <ligand>
        <name>ATP</name>
        <dbReference type="ChEBI" id="CHEBI:30616"/>
    </ligand>
</feature>
<comment type="function">
    <text evidence="1">Catalyzes the phosphorylation of the position 2 hydroxy group of 4-diphosphocytidyl-2C-methyl-D-erythritol.</text>
</comment>
<comment type="catalytic activity">
    <reaction evidence="1">
        <text>4-CDP-2-C-methyl-D-erythritol + ATP = 4-CDP-2-C-methyl-D-erythritol 2-phosphate + ADP + H(+)</text>
        <dbReference type="Rhea" id="RHEA:18437"/>
        <dbReference type="ChEBI" id="CHEBI:15378"/>
        <dbReference type="ChEBI" id="CHEBI:30616"/>
        <dbReference type="ChEBI" id="CHEBI:57823"/>
        <dbReference type="ChEBI" id="CHEBI:57919"/>
        <dbReference type="ChEBI" id="CHEBI:456216"/>
        <dbReference type="EC" id="2.7.1.148"/>
    </reaction>
</comment>
<comment type="pathway">
    <text evidence="1">Isoprenoid biosynthesis; isopentenyl diphosphate biosynthesis via DXP pathway; isopentenyl diphosphate from 1-deoxy-D-xylulose 5-phosphate: step 3/6.</text>
</comment>
<comment type="subunit">
    <text evidence="1">Homodimer.</text>
</comment>
<comment type="similarity">
    <text evidence="1">Belongs to the GHMP kinase family. IspE subfamily.</text>
</comment>
<keyword id="KW-0067">ATP-binding</keyword>
<keyword id="KW-0414">Isoprene biosynthesis</keyword>
<keyword id="KW-0418">Kinase</keyword>
<keyword id="KW-0547">Nucleotide-binding</keyword>
<keyword id="KW-1185">Reference proteome</keyword>
<keyword id="KW-0808">Transferase</keyword>
<gene>
    <name evidence="1" type="primary">ispE</name>
    <name type="ordered locus">E2348C_1331</name>
</gene>
<reference key="1">
    <citation type="journal article" date="2009" name="J. Bacteriol.">
        <title>Complete genome sequence and comparative genome analysis of enteropathogenic Escherichia coli O127:H6 strain E2348/69.</title>
        <authorList>
            <person name="Iguchi A."/>
            <person name="Thomson N.R."/>
            <person name="Ogura Y."/>
            <person name="Saunders D."/>
            <person name="Ooka T."/>
            <person name="Henderson I.R."/>
            <person name="Harris D."/>
            <person name="Asadulghani M."/>
            <person name="Kurokawa K."/>
            <person name="Dean P."/>
            <person name="Kenny B."/>
            <person name="Quail M.A."/>
            <person name="Thurston S."/>
            <person name="Dougan G."/>
            <person name="Hayashi T."/>
            <person name="Parkhill J."/>
            <person name="Frankel G."/>
        </authorList>
    </citation>
    <scope>NUCLEOTIDE SEQUENCE [LARGE SCALE GENOMIC DNA]</scope>
    <source>
        <strain>E2348/69 / EPEC</strain>
    </source>
</reference>
<organism>
    <name type="scientific">Escherichia coli O127:H6 (strain E2348/69 / EPEC)</name>
    <dbReference type="NCBI Taxonomy" id="574521"/>
    <lineage>
        <taxon>Bacteria</taxon>
        <taxon>Pseudomonadati</taxon>
        <taxon>Pseudomonadota</taxon>
        <taxon>Gammaproteobacteria</taxon>
        <taxon>Enterobacterales</taxon>
        <taxon>Enterobacteriaceae</taxon>
        <taxon>Escherichia</taxon>
    </lineage>
</organism>
<name>ISPE_ECO27</name>
<sequence length="283" mass="31033">MRTQWPSPAKLNLFLYITGQRADGYHTLQTLFQFLDYGDTISIELRDDGDIRLLTPVEGVEHEDNLIVRAARLLMKTAADSGRLSTGSGANISIDKRLPMGGGLGGGSSNAATVLVALNHLWQCGLSMDELAEMGLTLGADVPVFVRGHAAFAEGVGEIFTPVDPPEKWYLVAHPGVSIPTPVIFKDPELPRNTPKRSIETLLKCEFSNDCEVIARKRFREVDVVLSWLLEYAPSRLTGTGACVFAEFDTESEARQVLEQAPEWLNGFVARGVNLSPLHRAML</sequence>